<protein>
    <recommendedName>
        <fullName evidence="1">Arginine--tRNA ligase</fullName>
        <ecNumber evidence="1">6.1.1.19</ecNumber>
    </recommendedName>
    <alternativeName>
        <fullName evidence="1">Arginyl-tRNA synthetase</fullName>
        <shortName evidence="1">ArgRS</shortName>
    </alternativeName>
</protein>
<evidence type="ECO:0000255" key="1">
    <source>
        <dbReference type="HAMAP-Rule" id="MF_00123"/>
    </source>
</evidence>
<organism>
    <name type="scientific">Moorella thermoacetica (strain ATCC 39073 / JCM 9320)</name>
    <dbReference type="NCBI Taxonomy" id="264732"/>
    <lineage>
        <taxon>Bacteria</taxon>
        <taxon>Bacillati</taxon>
        <taxon>Bacillota</taxon>
        <taxon>Clostridia</taxon>
        <taxon>Moorellales</taxon>
        <taxon>Moorellaceae</taxon>
        <taxon>Moorella</taxon>
    </lineage>
</organism>
<comment type="catalytic activity">
    <reaction evidence="1">
        <text>tRNA(Arg) + L-arginine + ATP = L-arginyl-tRNA(Arg) + AMP + diphosphate</text>
        <dbReference type="Rhea" id="RHEA:20301"/>
        <dbReference type="Rhea" id="RHEA-COMP:9658"/>
        <dbReference type="Rhea" id="RHEA-COMP:9673"/>
        <dbReference type="ChEBI" id="CHEBI:30616"/>
        <dbReference type="ChEBI" id="CHEBI:32682"/>
        <dbReference type="ChEBI" id="CHEBI:33019"/>
        <dbReference type="ChEBI" id="CHEBI:78442"/>
        <dbReference type="ChEBI" id="CHEBI:78513"/>
        <dbReference type="ChEBI" id="CHEBI:456215"/>
        <dbReference type="EC" id="6.1.1.19"/>
    </reaction>
</comment>
<comment type="subunit">
    <text evidence="1">Monomer.</text>
</comment>
<comment type="subcellular location">
    <subcellularLocation>
        <location evidence="1">Cytoplasm</location>
    </subcellularLocation>
</comment>
<comment type="similarity">
    <text evidence="1">Belongs to the class-I aminoacyl-tRNA synthetase family.</text>
</comment>
<reference key="1">
    <citation type="journal article" date="2008" name="Environ. Microbiol.">
        <title>The complete genome sequence of Moorella thermoacetica (f. Clostridium thermoaceticum).</title>
        <authorList>
            <person name="Pierce E."/>
            <person name="Xie G."/>
            <person name="Barabote R.D."/>
            <person name="Saunders E."/>
            <person name="Han C.S."/>
            <person name="Detter J.C."/>
            <person name="Richardson P."/>
            <person name="Brettin T.S."/>
            <person name="Das A."/>
            <person name="Ljungdahl L.G."/>
            <person name="Ragsdale S.W."/>
        </authorList>
    </citation>
    <scope>NUCLEOTIDE SEQUENCE [LARGE SCALE GENOMIC DNA]</scope>
    <source>
        <strain>ATCC 39073 / JCM 9320</strain>
    </source>
</reference>
<keyword id="KW-0030">Aminoacyl-tRNA synthetase</keyword>
<keyword id="KW-0067">ATP-binding</keyword>
<keyword id="KW-0963">Cytoplasm</keyword>
<keyword id="KW-0436">Ligase</keyword>
<keyword id="KW-0547">Nucleotide-binding</keyword>
<keyword id="KW-0648">Protein biosynthesis</keyword>
<sequence length="560" mass="62432">MNIVQETKRRLAAALTDAAATARAAGEISYDELPDFVIETPRDKTHGDFAANLALLLARQARQSPRNVAAAIVRHLERPQPGVARVEVAGPGFINFTLDNQWLLPVLPAVLAEDDHYGWSNIGQGAKVQVEFVSANPTGLLHMGNARGAALGDSIANLLTAVGYDVTREFYINDAGNQIENFGLSLEARYLQALGQEASIPEDGYHGEDLVATVGRFIAKYGDKYLDTDPALRREMLVRFALEEKLDAIRRALEDFGVTYDVWFSEQSLHDSGAVARAIADLEKAGYIYEKDGALWFKATSFGDVKDEVVVRKNGIPTYFAADIAYHRNKFERGFERVINIWGADHHGHVARLKGALQALGYDPRRLEVVLMQLVRLYQGGEILRMSKRTGQYVTLEELIEEVGRDAARYFFVMLKSDSHLEFDLDLARSQSADNPVYYVQYAHARICSILRLAKDRGLEVPPAREARLELLQDPAELELIKQIAAWPDTVAGAAQALEPHRLTRFAHDLASLFHSFYTSCRVLADDPEVRKARLVLVEATRITLRNVLHLLGVTAPERM</sequence>
<dbReference type="EC" id="6.1.1.19" evidence="1"/>
<dbReference type="EMBL" id="CP000232">
    <property type="protein sequence ID" value="ABC20692.1"/>
    <property type="molecule type" value="Genomic_DNA"/>
</dbReference>
<dbReference type="RefSeq" id="YP_431235.1">
    <property type="nucleotide sequence ID" value="NC_007644.1"/>
</dbReference>
<dbReference type="SMR" id="Q2RFU7"/>
<dbReference type="STRING" id="264732.Moth_2410"/>
<dbReference type="EnsemblBacteria" id="ABC20692">
    <property type="protein sequence ID" value="ABC20692"/>
    <property type="gene ID" value="Moth_2410"/>
</dbReference>
<dbReference type="KEGG" id="mta:Moth_2410"/>
<dbReference type="PATRIC" id="fig|264732.11.peg.2624"/>
<dbReference type="eggNOG" id="COG0018">
    <property type="taxonomic scope" value="Bacteria"/>
</dbReference>
<dbReference type="HOGENOM" id="CLU_006406_0_1_9"/>
<dbReference type="OrthoDB" id="9805987at2"/>
<dbReference type="GO" id="GO:0005737">
    <property type="term" value="C:cytoplasm"/>
    <property type="evidence" value="ECO:0007669"/>
    <property type="project" value="UniProtKB-SubCell"/>
</dbReference>
<dbReference type="GO" id="GO:0004814">
    <property type="term" value="F:arginine-tRNA ligase activity"/>
    <property type="evidence" value="ECO:0007669"/>
    <property type="project" value="UniProtKB-UniRule"/>
</dbReference>
<dbReference type="GO" id="GO:0005524">
    <property type="term" value="F:ATP binding"/>
    <property type="evidence" value="ECO:0007669"/>
    <property type="project" value="UniProtKB-UniRule"/>
</dbReference>
<dbReference type="GO" id="GO:0006420">
    <property type="term" value="P:arginyl-tRNA aminoacylation"/>
    <property type="evidence" value="ECO:0007669"/>
    <property type="project" value="UniProtKB-UniRule"/>
</dbReference>
<dbReference type="CDD" id="cd07956">
    <property type="entry name" value="Anticodon_Ia_Arg"/>
    <property type="match status" value="1"/>
</dbReference>
<dbReference type="CDD" id="cd00671">
    <property type="entry name" value="ArgRS_core"/>
    <property type="match status" value="1"/>
</dbReference>
<dbReference type="FunFam" id="1.10.730.10:FF:000008">
    <property type="entry name" value="Arginine--tRNA ligase"/>
    <property type="match status" value="1"/>
</dbReference>
<dbReference type="FunFam" id="3.30.1360.70:FF:000003">
    <property type="entry name" value="Arginine--tRNA ligase"/>
    <property type="match status" value="1"/>
</dbReference>
<dbReference type="FunFam" id="3.40.50.620:FF:000062">
    <property type="entry name" value="Arginine--tRNA ligase"/>
    <property type="match status" value="1"/>
</dbReference>
<dbReference type="Gene3D" id="3.30.1360.70">
    <property type="entry name" value="Arginyl tRNA synthetase N-terminal domain"/>
    <property type="match status" value="1"/>
</dbReference>
<dbReference type="Gene3D" id="3.40.50.620">
    <property type="entry name" value="HUPs"/>
    <property type="match status" value="1"/>
</dbReference>
<dbReference type="Gene3D" id="1.10.730.10">
    <property type="entry name" value="Isoleucyl-tRNA Synthetase, Domain 1"/>
    <property type="match status" value="1"/>
</dbReference>
<dbReference type="HAMAP" id="MF_00123">
    <property type="entry name" value="Arg_tRNA_synth"/>
    <property type="match status" value="1"/>
</dbReference>
<dbReference type="InterPro" id="IPR001412">
    <property type="entry name" value="aa-tRNA-synth_I_CS"/>
</dbReference>
<dbReference type="InterPro" id="IPR001278">
    <property type="entry name" value="Arg-tRNA-ligase"/>
</dbReference>
<dbReference type="InterPro" id="IPR005148">
    <property type="entry name" value="Arg-tRNA-synth_N"/>
</dbReference>
<dbReference type="InterPro" id="IPR036695">
    <property type="entry name" value="Arg-tRNA-synth_N_sf"/>
</dbReference>
<dbReference type="InterPro" id="IPR035684">
    <property type="entry name" value="ArgRS_core"/>
</dbReference>
<dbReference type="InterPro" id="IPR008909">
    <property type="entry name" value="DALR_anticod-bd"/>
</dbReference>
<dbReference type="InterPro" id="IPR014729">
    <property type="entry name" value="Rossmann-like_a/b/a_fold"/>
</dbReference>
<dbReference type="InterPro" id="IPR009080">
    <property type="entry name" value="tRNAsynth_Ia_anticodon-bd"/>
</dbReference>
<dbReference type="NCBIfam" id="TIGR00456">
    <property type="entry name" value="argS"/>
    <property type="match status" value="1"/>
</dbReference>
<dbReference type="PANTHER" id="PTHR11956:SF5">
    <property type="entry name" value="ARGININE--TRNA LIGASE, CYTOPLASMIC"/>
    <property type="match status" value="1"/>
</dbReference>
<dbReference type="PANTHER" id="PTHR11956">
    <property type="entry name" value="ARGINYL-TRNA SYNTHETASE"/>
    <property type="match status" value="1"/>
</dbReference>
<dbReference type="Pfam" id="PF03485">
    <property type="entry name" value="Arg_tRNA_synt_N"/>
    <property type="match status" value="1"/>
</dbReference>
<dbReference type="Pfam" id="PF05746">
    <property type="entry name" value="DALR_1"/>
    <property type="match status" value="1"/>
</dbReference>
<dbReference type="Pfam" id="PF00750">
    <property type="entry name" value="tRNA-synt_1d"/>
    <property type="match status" value="1"/>
</dbReference>
<dbReference type="PRINTS" id="PR01038">
    <property type="entry name" value="TRNASYNTHARG"/>
</dbReference>
<dbReference type="SMART" id="SM01016">
    <property type="entry name" value="Arg_tRNA_synt_N"/>
    <property type="match status" value="1"/>
</dbReference>
<dbReference type="SMART" id="SM00836">
    <property type="entry name" value="DALR_1"/>
    <property type="match status" value="1"/>
</dbReference>
<dbReference type="SUPFAM" id="SSF47323">
    <property type="entry name" value="Anticodon-binding domain of a subclass of class I aminoacyl-tRNA synthetases"/>
    <property type="match status" value="1"/>
</dbReference>
<dbReference type="SUPFAM" id="SSF55190">
    <property type="entry name" value="Arginyl-tRNA synthetase (ArgRS), N-terminal 'additional' domain"/>
    <property type="match status" value="1"/>
</dbReference>
<dbReference type="SUPFAM" id="SSF52374">
    <property type="entry name" value="Nucleotidylyl transferase"/>
    <property type="match status" value="1"/>
</dbReference>
<dbReference type="PROSITE" id="PS00178">
    <property type="entry name" value="AA_TRNA_LIGASE_I"/>
    <property type="match status" value="1"/>
</dbReference>
<name>SYR_MOOTA</name>
<feature type="chain" id="PRO_0000242044" description="Arginine--tRNA ligase">
    <location>
        <begin position="1"/>
        <end position="560"/>
    </location>
</feature>
<feature type="short sequence motif" description="'HIGH' region">
    <location>
        <begin position="135"/>
        <end position="145"/>
    </location>
</feature>
<accession>Q2RFU7</accession>
<proteinExistence type="inferred from homology"/>
<gene>
    <name evidence="1" type="primary">argS</name>
    <name type="ordered locus">Moth_2410</name>
</gene>